<gene>
    <name evidence="1" type="primary">mepA</name>
    <name type="ordered locus">SSON_2386</name>
</gene>
<accession>Q3YZN3</accession>
<comment type="function">
    <text evidence="1">Murein endopeptidase that cleaves the D-alanyl-meso-2,6-diamino-pimelyl amide bond that connects peptidoglycan strands. Likely plays a role in the removal of murein from the sacculus.</text>
</comment>
<comment type="cofactor">
    <cofactor evidence="1">
        <name>Zn(2+)</name>
        <dbReference type="ChEBI" id="CHEBI:29105"/>
    </cofactor>
    <text evidence="1">Binds 2 Zn(2+) ions per subunit. Zn(2+) ion 1 is bound in the active site. Zn(2+) ion 2 is bound at the dimer interface by residues from both subunits.</text>
</comment>
<comment type="subunit">
    <text evidence="1">Dimer.</text>
</comment>
<comment type="subcellular location">
    <subcellularLocation>
        <location evidence="1">Periplasm</location>
    </subcellularLocation>
</comment>
<comment type="similarity">
    <text evidence="1">Belongs to the peptidase M74 family.</text>
</comment>
<name>MEPA_SHISS</name>
<keyword id="KW-1015">Disulfide bond</keyword>
<keyword id="KW-0378">Hydrolase</keyword>
<keyword id="KW-0479">Metal-binding</keyword>
<keyword id="KW-0482">Metalloprotease</keyword>
<keyword id="KW-0574">Periplasm</keyword>
<keyword id="KW-0645">Protease</keyword>
<keyword id="KW-1185">Reference proteome</keyword>
<keyword id="KW-0732">Signal</keyword>
<keyword id="KW-0862">Zinc</keyword>
<organism>
    <name type="scientific">Shigella sonnei (strain Ss046)</name>
    <dbReference type="NCBI Taxonomy" id="300269"/>
    <lineage>
        <taxon>Bacteria</taxon>
        <taxon>Pseudomonadati</taxon>
        <taxon>Pseudomonadota</taxon>
        <taxon>Gammaproteobacteria</taxon>
        <taxon>Enterobacterales</taxon>
        <taxon>Enterobacteriaceae</taxon>
        <taxon>Shigella</taxon>
    </lineage>
</organism>
<evidence type="ECO:0000255" key="1">
    <source>
        <dbReference type="HAMAP-Rule" id="MF_01623"/>
    </source>
</evidence>
<sequence>MNKTAIALLALLASSASLAATPWQKITQPVPGSAQSIGSFSNGCIVGADTLPIQSEHYQVMRTDQRRYFGHPDLVMFIQRLSSQVSNLGMGTVLIGDMGMPAGGRFNGGHASHQTGLDVDIFLQLPKTRWTSAQLLRPQALDLVSRDGKHVVSTLWKPEIFSLIKLAAQDKDVTRIFVNPAIKQQLCLDAGTDRDWLRKVRPWFQHRAHMHVRLRCPADSLECEDQPLPPSGDGCGAELQSWFAPLKPGTTKPEKKTPPPLPPSCQALLDEHVI</sequence>
<reference key="1">
    <citation type="journal article" date="2005" name="Nucleic Acids Res.">
        <title>Genome dynamics and diversity of Shigella species, the etiologic agents of bacillary dysentery.</title>
        <authorList>
            <person name="Yang F."/>
            <person name="Yang J."/>
            <person name="Zhang X."/>
            <person name="Chen L."/>
            <person name="Jiang Y."/>
            <person name="Yan Y."/>
            <person name="Tang X."/>
            <person name="Wang J."/>
            <person name="Xiong Z."/>
            <person name="Dong J."/>
            <person name="Xue Y."/>
            <person name="Zhu Y."/>
            <person name="Xu X."/>
            <person name="Sun L."/>
            <person name="Chen S."/>
            <person name="Nie H."/>
            <person name="Peng J."/>
            <person name="Xu J."/>
            <person name="Wang Y."/>
            <person name="Yuan Z."/>
            <person name="Wen Y."/>
            <person name="Yao Z."/>
            <person name="Shen Y."/>
            <person name="Qiang B."/>
            <person name="Hou Y."/>
            <person name="Yu J."/>
            <person name="Jin Q."/>
        </authorList>
    </citation>
    <scope>NUCLEOTIDE SEQUENCE [LARGE SCALE GENOMIC DNA]</scope>
    <source>
        <strain>Ss046</strain>
    </source>
</reference>
<proteinExistence type="inferred from homology"/>
<dbReference type="EC" id="3.4.24.-" evidence="1"/>
<dbReference type="EMBL" id="CP000038">
    <property type="protein sequence ID" value="AAZ89029.1"/>
    <property type="molecule type" value="Genomic_DNA"/>
</dbReference>
<dbReference type="RefSeq" id="WP_001043823.1">
    <property type="nucleotide sequence ID" value="NC_007384.1"/>
</dbReference>
<dbReference type="SMR" id="Q3YZN3"/>
<dbReference type="MEROPS" id="M74.001"/>
<dbReference type="GeneID" id="93774847"/>
<dbReference type="KEGG" id="ssn:SSON_2386"/>
<dbReference type="HOGENOM" id="CLU_052496_0_0_6"/>
<dbReference type="Proteomes" id="UP000002529">
    <property type="component" value="Chromosome"/>
</dbReference>
<dbReference type="GO" id="GO:0030288">
    <property type="term" value="C:outer membrane-bounded periplasmic space"/>
    <property type="evidence" value="ECO:0007669"/>
    <property type="project" value="InterPro"/>
</dbReference>
<dbReference type="GO" id="GO:0046872">
    <property type="term" value="F:metal ion binding"/>
    <property type="evidence" value="ECO:0007669"/>
    <property type="project" value="UniProtKB-KW"/>
</dbReference>
<dbReference type="GO" id="GO:0004222">
    <property type="term" value="F:metalloendopeptidase activity"/>
    <property type="evidence" value="ECO:0007669"/>
    <property type="project" value="UniProtKB-UniRule"/>
</dbReference>
<dbReference type="GO" id="GO:0004252">
    <property type="term" value="F:serine-type endopeptidase activity"/>
    <property type="evidence" value="ECO:0007669"/>
    <property type="project" value="InterPro"/>
</dbReference>
<dbReference type="GO" id="GO:0000270">
    <property type="term" value="P:peptidoglycan metabolic process"/>
    <property type="evidence" value="ECO:0007669"/>
    <property type="project" value="UniProtKB-UniRule"/>
</dbReference>
<dbReference type="GO" id="GO:0006508">
    <property type="term" value="P:proteolysis"/>
    <property type="evidence" value="ECO:0007669"/>
    <property type="project" value="UniProtKB-KW"/>
</dbReference>
<dbReference type="FunFam" id="3.30.1380.10:FF:000002">
    <property type="entry name" value="Penicillin-insensitive murein endopeptidase"/>
    <property type="match status" value="1"/>
</dbReference>
<dbReference type="Gene3D" id="3.30.1380.10">
    <property type="match status" value="1"/>
</dbReference>
<dbReference type="HAMAP" id="MF_01623">
    <property type="entry name" value="MepA"/>
    <property type="match status" value="1"/>
</dbReference>
<dbReference type="InterPro" id="IPR009045">
    <property type="entry name" value="Hedgehog_sig/DD-Pept_Zn-bd_sf"/>
</dbReference>
<dbReference type="InterPro" id="IPR005073">
    <property type="entry name" value="Peptidase_M74"/>
</dbReference>
<dbReference type="NCBIfam" id="NF006947">
    <property type="entry name" value="PRK09429.1"/>
    <property type="match status" value="1"/>
</dbReference>
<dbReference type="Pfam" id="PF03411">
    <property type="entry name" value="Peptidase_M74"/>
    <property type="match status" value="1"/>
</dbReference>
<dbReference type="PIRSF" id="PIRSF018455">
    <property type="entry name" value="MepA"/>
    <property type="match status" value="1"/>
</dbReference>
<dbReference type="SUPFAM" id="SSF55166">
    <property type="entry name" value="Hedgehog/DD-peptidase"/>
    <property type="match status" value="1"/>
</dbReference>
<protein>
    <recommendedName>
        <fullName evidence="1">Penicillin-insensitive murein endopeptidase</fullName>
        <ecNumber evidence="1">3.4.24.-</ecNumber>
    </recommendedName>
    <alternativeName>
        <fullName evidence="1">D-alanyl-D-alanine-endopeptidase</fullName>
        <shortName evidence="1">DD-endopeptidase</shortName>
    </alternativeName>
</protein>
<feature type="signal peptide" evidence="1">
    <location>
        <begin position="1"/>
        <end position="19"/>
    </location>
</feature>
<feature type="chain" id="PRO_0000044583" description="Penicillin-insensitive murein endopeptidase">
    <location>
        <begin position="20"/>
        <end position="274"/>
    </location>
</feature>
<feature type="binding site" evidence="1">
    <location>
        <position position="110"/>
    </location>
    <ligand>
        <name>Zn(2+)</name>
        <dbReference type="ChEBI" id="CHEBI:29105"/>
        <label>1</label>
    </ligand>
</feature>
<feature type="binding site" evidence="1">
    <location>
        <position position="113"/>
    </location>
    <ligand>
        <name>Zn(2+)</name>
        <dbReference type="ChEBI" id="CHEBI:29105"/>
        <label>1</label>
    </ligand>
</feature>
<feature type="binding site" evidence="1">
    <location>
        <position position="120"/>
    </location>
    <ligand>
        <name>Zn(2+)</name>
        <dbReference type="ChEBI" id="CHEBI:29105"/>
        <label>1</label>
    </ligand>
</feature>
<feature type="binding site" evidence="1">
    <location>
        <position position="147"/>
    </location>
    <ligand>
        <name>Zn(2+)</name>
        <dbReference type="ChEBI" id="CHEBI:29105"/>
        <label>2</label>
    </ligand>
</feature>
<feature type="binding site" evidence="1">
    <location>
        <position position="150"/>
    </location>
    <ligand>
        <name>Zn(2+)</name>
        <dbReference type="ChEBI" id="CHEBI:29105"/>
        <label>2</label>
    </ligand>
</feature>
<feature type="binding site" evidence="1">
    <location>
        <position position="211"/>
    </location>
    <ligand>
        <name>Zn(2+)</name>
        <dbReference type="ChEBI" id="CHEBI:29105"/>
        <label>1</label>
    </ligand>
</feature>
<feature type="disulfide bond" evidence="1">
    <location>
        <begin position="44"/>
        <end position="265"/>
    </location>
</feature>
<feature type="disulfide bond" evidence="1">
    <location>
        <begin position="187"/>
        <end position="235"/>
    </location>
</feature>
<feature type="disulfide bond" evidence="1">
    <location>
        <begin position="216"/>
        <end position="223"/>
    </location>
</feature>